<evidence type="ECO:0000255" key="1">
    <source>
        <dbReference type="HAMAP-Rule" id="MF_00107"/>
    </source>
</evidence>
<protein>
    <recommendedName>
        <fullName evidence="1">2-C-methyl-D-erythritol 2,4-cyclodiphosphate synthase</fullName>
        <shortName evidence="1">MECDP-synthase</shortName>
        <shortName evidence="1">MECPP-synthase</shortName>
        <shortName evidence="1">MECPS</shortName>
        <ecNumber evidence="1">4.6.1.12</ecNumber>
    </recommendedName>
</protein>
<sequence>MRIGHGFDVHAFGGEGPIIIGGVRIPYEKGLLAHSDGDVALHALTDALLGAAALGDIGKLFPDTDPAFKGADSRELLREAWRRIQAKGYTLGNVDVTIIAQAPKMLPHIPRMRVFIAEDLGCHMDDVNVKATTTEKLGFTGRGEGIACEAVALLMKAAK</sequence>
<organism>
    <name type="scientific">Salmonella choleraesuis (strain SC-B67)</name>
    <dbReference type="NCBI Taxonomy" id="321314"/>
    <lineage>
        <taxon>Bacteria</taxon>
        <taxon>Pseudomonadati</taxon>
        <taxon>Pseudomonadota</taxon>
        <taxon>Gammaproteobacteria</taxon>
        <taxon>Enterobacterales</taxon>
        <taxon>Enterobacteriaceae</taxon>
        <taxon>Salmonella</taxon>
    </lineage>
</organism>
<proteinExistence type="inferred from homology"/>
<reference key="1">
    <citation type="journal article" date="2005" name="Nucleic Acids Res.">
        <title>The genome sequence of Salmonella enterica serovar Choleraesuis, a highly invasive and resistant zoonotic pathogen.</title>
        <authorList>
            <person name="Chiu C.-H."/>
            <person name="Tang P."/>
            <person name="Chu C."/>
            <person name="Hu S."/>
            <person name="Bao Q."/>
            <person name="Yu J."/>
            <person name="Chou Y.-Y."/>
            <person name="Wang H.-S."/>
            <person name="Lee Y.-S."/>
        </authorList>
    </citation>
    <scope>NUCLEOTIDE SEQUENCE [LARGE SCALE GENOMIC DNA]</scope>
    <source>
        <strain>SC-B67</strain>
    </source>
</reference>
<feature type="chain" id="PRO_0000237750" description="2-C-methyl-D-erythritol 2,4-cyclodiphosphate synthase">
    <location>
        <begin position="1"/>
        <end position="159"/>
    </location>
</feature>
<feature type="binding site" evidence="1">
    <location>
        <begin position="8"/>
        <end position="10"/>
    </location>
    <ligand>
        <name>4-CDP-2-C-methyl-D-erythritol 2-phosphate</name>
        <dbReference type="ChEBI" id="CHEBI:57919"/>
    </ligand>
</feature>
<feature type="binding site" evidence="1">
    <location>
        <position position="8"/>
    </location>
    <ligand>
        <name>a divalent metal cation</name>
        <dbReference type="ChEBI" id="CHEBI:60240"/>
    </ligand>
</feature>
<feature type="binding site" evidence="1">
    <location>
        <position position="10"/>
    </location>
    <ligand>
        <name>a divalent metal cation</name>
        <dbReference type="ChEBI" id="CHEBI:60240"/>
    </ligand>
</feature>
<feature type="binding site" evidence="1">
    <location>
        <begin position="34"/>
        <end position="35"/>
    </location>
    <ligand>
        <name>4-CDP-2-C-methyl-D-erythritol 2-phosphate</name>
        <dbReference type="ChEBI" id="CHEBI:57919"/>
    </ligand>
</feature>
<feature type="binding site" evidence="1">
    <location>
        <position position="42"/>
    </location>
    <ligand>
        <name>a divalent metal cation</name>
        <dbReference type="ChEBI" id="CHEBI:60240"/>
    </ligand>
</feature>
<feature type="binding site" evidence="1">
    <location>
        <begin position="56"/>
        <end position="58"/>
    </location>
    <ligand>
        <name>4-CDP-2-C-methyl-D-erythritol 2-phosphate</name>
        <dbReference type="ChEBI" id="CHEBI:57919"/>
    </ligand>
</feature>
<feature type="binding site" evidence="1">
    <location>
        <begin position="61"/>
        <end position="65"/>
    </location>
    <ligand>
        <name>4-CDP-2-C-methyl-D-erythritol 2-phosphate</name>
        <dbReference type="ChEBI" id="CHEBI:57919"/>
    </ligand>
</feature>
<feature type="binding site" evidence="1">
    <location>
        <begin position="100"/>
        <end position="106"/>
    </location>
    <ligand>
        <name>4-CDP-2-C-methyl-D-erythritol 2-phosphate</name>
        <dbReference type="ChEBI" id="CHEBI:57919"/>
    </ligand>
</feature>
<feature type="binding site" evidence="1">
    <location>
        <begin position="132"/>
        <end position="135"/>
    </location>
    <ligand>
        <name>4-CDP-2-C-methyl-D-erythritol 2-phosphate</name>
        <dbReference type="ChEBI" id="CHEBI:57919"/>
    </ligand>
</feature>
<feature type="binding site" evidence="1">
    <location>
        <position position="139"/>
    </location>
    <ligand>
        <name>4-CDP-2-C-methyl-D-erythritol 2-phosphate</name>
        <dbReference type="ChEBI" id="CHEBI:57919"/>
    </ligand>
</feature>
<feature type="binding site" evidence="1">
    <location>
        <position position="142"/>
    </location>
    <ligand>
        <name>4-CDP-2-C-methyl-D-erythritol 2-phosphate</name>
        <dbReference type="ChEBI" id="CHEBI:57919"/>
    </ligand>
</feature>
<feature type="site" description="Transition state stabilizer" evidence="1">
    <location>
        <position position="34"/>
    </location>
</feature>
<feature type="site" description="Transition state stabilizer" evidence="1">
    <location>
        <position position="133"/>
    </location>
</feature>
<keyword id="KW-0414">Isoprene biosynthesis</keyword>
<keyword id="KW-0456">Lyase</keyword>
<keyword id="KW-0479">Metal-binding</keyword>
<dbReference type="EC" id="4.6.1.12" evidence="1"/>
<dbReference type="EMBL" id="AE017220">
    <property type="protein sequence ID" value="AAX66767.1"/>
    <property type="molecule type" value="Genomic_DNA"/>
</dbReference>
<dbReference type="RefSeq" id="WP_001540800.1">
    <property type="nucleotide sequence ID" value="NC_006905.1"/>
</dbReference>
<dbReference type="SMR" id="Q57KJ5"/>
<dbReference type="KEGG" id="sec:SCH_2861"/>
<dbReference type="HOGENOM" id="CLU_084630_2_0_6"/>
<dbReference type="UniPathway" id="UPA00056">
    <property type="reaction ID" value="UER00095"/>
</dbReference>
<dbReference type="Proteomes" id="UP000000538">
    <property type="component" value="Chromosome"/>
</dbReference>
<dbReference type="GO" id="GO:0008685">
    <property type="term" value="F:2-C-methyl-D-erythritol 2,4-cyclodiphosphate synthase activity"/>
    <property type="evidence" value="ECO:0007669"/>
    <property type="project" value="UniProtKB-UniRule"/>
</dbReference>
<dbReference type="GO" id="GO:0046872">
    <property type="term" value="F:metal ion binding"/>
    <property type="evidence" value="ECO:0007669"/>
    <property type="project" value="UniProtKB-KW"/>
</dbReference>
<dbReference type="GO" id="GO:0019288">
    <property type="term" value="P:isopentenyl diphosphate biosynthetic process, methylerythritol 4-phosphate pathway"/>
    <property type="evidence" value="ECO:0007669"/>
    <property type="project" value="UniProtKB-UniRule"/>
</dbReference>
<dbReference type="GO" id="GO:0016114">
    <property type="term" value="P:terpenoid biosynthetic process"/>
    <property type="evidence" value="ECO:0007669"/>
    <property type="project" value="InterPro"/>
</dbReference>
<dbReference type="CDD" id="cd00554">
    <property type="entry name" value="MECDP_synthase"/>
    <property type="match status" value="1"/>
</dbReference>
<dbReference type="FunFam" id="3.30.1330.50:FF:000001">
    <property type="entry name" value="2-C-methyl-D-erythritol 2,4-cyclodiphosphate synthase"/>
    <property type="match status" value="1"/>
</dbReference>
<dbReference type="Gene3D" id="3.30.1330.50">
    <property type="entry name" value="2-C-methyl-D-erythritol 2,4-cyclodiphosphate synthase"/>
    <property type="match status" value="1"/>
</dbReference>
<dbReference type="HAMAP" id="MF_00107">
    <property type="entry name" value="IspF"/>
    <property type="match status" value="1"/>
</dbReference>
<dbReference type="InterPro" id="IPR003526">
    <property type="entry name" value="MECDP_synthase"/>
</dbReference>
<dbReference type="InterPro" id="IPR020555">
    <property type="entry name" value="MECDP_synthase_CS"/>
</dbReference>
<dbReference type="InterPro" id="IPR036571">
    <property type="entry name" value="MECDP_synthase_sf"/>
</dbReference>
<dbReference type="NCBIfam" id="TIGR00151">
    <property type="entry name" value="ispF"/>
    <property type="match status" value="1"/>
</dbReference>
<dbReference type="PANTHER" id="PTHR43181">
    <property type="entry name" value="2-C-METHYL-D-ERYTHRITOL 2,4-CYCLODIPHOSPHATE SYNTHASE, CHLOROPLASTIC"/>
    <property type="match status" value="1"/>
</dbReference>
<dbReference type="PANTHER" id="PTHR43181:SF1">
    <property type="entry name" value="2-C-METHYL-D-ERYTHRITOL 2,4-CYCLODIPHOSPHATE SYNTHASE, CHLOROPLASTIC"/>
    <property type="match status" value="1"/>
</dbReference>
<dbReference type="Pfam" id="PF02542">
    <property type="entry name" value="YgbB"/>
    <property type="match status" value="1"/>
</dbReference>
<dbReference type="SUPFAM" id="SSF69765">
    <property type="entry name" value="IpsF-like"/>
    <property type="match status" value="1"/>
</dbReference>
<dbReference type="PROSITE" id="PS01350">
    <property type="entry name" value="ISPF"/>
    <property type="match status" value="1"/>
</dbReference>
<gene>
    <name evidence="1" type="primary">ispF</name>
    <name type="ordered locus">SCH_2861</name>
</gene>
<comment type="function">
    <text evidence="1">Involved in the biosynthesis of isopentenyl diphosphate (IPP) and dimethylallyl diphosphate (DMAPP), two major building blocks of isoprenoid compounds. Catalyzes the conversion of 4-diphosphocytidyl-2-C-methyl-D-erythritol 2-phosphate (CDP-ME2P) to 2-C-methyl-D-erythritol 2,4-cyclodiphosphate (ME-CPP) with a corresponding release of cytidine 5-monophosphate (CMP).</text>
</comment>
<comment type="catalytic activity">
    <reaction evidence="1">
        <text>4-CDP-2-C-methyl-D-erythritol 2-phosphate = 2-C-methyl-D-erythritol 2,4-cyclic diphosphate + CMP</text>
        <dbReference type="Rhea" id="RHEA:23864"/>
        <dbReference type="ChEBI" id="CHEBI:57919"/>
        <dbReference type="ChEBI" id="CHEBI:58483"/>
        <dbReference type="ChEBI" id="CHEBI:60377"/>
        <dbReference type="EC" id="4.6.1.12"/>
    </reaction>
</comment>
<comment type="cofactor">
    <cofactor evidence="1">
        <name>a divalent metal cation</name>
        <dbReference type="ChEBI" id="CHEBI:60240"/>
    </cofactor>
    <text evidence="1">Binds 1 divalent metal cation per subunit.</text>
</comment>
<comment type="pathway">
    <text evidence="1">Isoprenoid biosynthesis; isopentenyl diphosphate biosynthesis via DXP pathway; isopentenyl diphosphate from 1-deoxy-D-xylulose 5-phosphate: step 4/6.</text>
</comment>
<comment type="subunit">
    <text evidence="1">Homotrimer.</text>
</comment>
<comment type="similarity">
    <text evidence="1">Belongs to the IspF family.</text>
</comment>
<accession>Q57KJ5</accession>
<name>ISPF_SALCH</name>